<keyword id="KW-0963">Cytoplasm</keyword>
<keyword id="KW-0329">Glyoxylate bypass</keyword>
<keyword id="KW-0460">Magnesium</keyword>
<keyword id="KW-0479">Metal-binding</keyword>
<keyword id="KW-0558">Oxidation</keyword>
<keyword id="KW-0808">Transferase</keyword>
<keyword id="KW-0816">Tricarboxylic acid cycle</keyword>
<proteinExistence type="inferred from homology"/>
<gene>
    <name evidence="1" type="primary">glcB</name>
    <name type="ordered locus">Rpal_4697</name>
</gene>
<dbReference type="EC" id="2.3.3.9" evidence="1"/>
<dbReference type="EMBL" id="CP001096">
    <property type="protein sequence ID" value="ACF03188.1"/>
    <property type="molecule type" value="Genomic_DNA"/>
</dbReference>
<dbReference type="RefSeq" id="WP_012497463.1">
    <property type="nucleotide sequence ID" value="NC_011004.1"/>
</dbReference>
<dbReference type="SMR" id="B3QKU1"/>
<dbReference type="KEGG" id="rpt:Rpal_4697"/>
<dbReference type="HOGENOM" id="CLU_028446_1_0_5"/>
<dbReference type="OrthoDB" id="9762054at2"/>
<dbReference type="UniPathway" id="UPA00703">
    <property type="reaction ID" value="UER00720"/>
</dbReference>
<dbReference type="Proteomes" id="UP000001725">
    <property type="component" value="Chromosome"/>
</dbReference>
<dbReference type="GO" id="GO:0005829">
    <property type="term" value="C:cytosol"/>
    <property type="evidence" value="ECO:0007669"/>
    <property type="project" value="TreeGrafter"/>
</dbReference>
<dbReference type="GO" id="GO:0000287">
    <property type="term" value="F:magnesium ion binding"/>
    <property type="evidence" value="ECO:0007669"/>
    <property type="project" value="TreeGrafter"/>
</dbReference>
<dbReference type="GO" id="GO:0004474">
    <property type="term" value="F:malate synthase activity"/>
    <property type="evidence" value="ECO:0007669"/>
    <property type="project" value="UniProtKB-UniRule"/>
</dbReference>
<dbReference type="GO" id="GO:0009436">
    <property type="term" value="P:glyoxylate catabolic process"/>
    <property type="evidence" value="ECO:0007669"/>
    <property type="project" value="TreeGrafter"/>
</dbReference>
<dbReference type="GO" id="GO:0006097">
    <property type="term" value="P:glyoxylate cycle"/>
    <property type="evidence" value="ECO:0007669"/>
    <property type="project" value="UniProtKB-UniRule"/>
</dbReference>
<dbReference type="GO" id="GO:0006099">
    <property type="term" value="P:tricarboxylic acid cycle"/>
    <property type="evidence" value="ECO:0007669"/>
    <property type="project" value="UniProtKB-KW"/>
</dbReference>
<dbReference type="FunFam" id="3.20.20.360:FF:000002">
    <property type="entry name" value="Malate synthase G"/>
    <property type="match status" value="1"/>
</dbReference>
<dbReference type="Gene3D" id="3.20.20.360">
    <property type="entry name" value="Malate synthase, domain 3"/>
    <property type="match status" value="2"/>
</dbReference>
<dbReference type="Gene3D" id="1.20.1220.12">
    <property type="entry name" value="Malate synthase, domain III"/>
    <property type="match status" value="1"/>
</dbReference>
<dbReference type="HAMAP" id="MF_00641">
    <property type="entry name" value="Malate_synth_G"/>
    <property type="match status" value="1"/>
</dbReference>
<dbReference type="InterPro" id="IPR044856">
    <property type="entry name" value="Malate_synth_C_sf"/>
</dbReference>
<dbReference type="InterPro" id="IPR011076">
    <property type="entry name" value="Malate_synth_sf"/>
</dbReference>
<dbReference type="InterPro" id="IPR001465">
    <property type="entry name" value="Malate_synthase_TIM"/>
</dbReference>
<dbReference type="InterPro" id="IPR006253">
    <property type="entry name" value="Malate_synthG"/>
</dbReference>
<dbReference type="InterPro" id="IPR048355">
    <property type="entry name" value="MS_C"/>
</dbReference>
<dbReference type="InterPro" id="IPR048356">
    <property type="entry name" value="MS_N"/>
</dbReference>
<dbReference type="InterPro" id="IPR046363">
    <property type="entry name" value="MS_N_TIM-barrel_dom"/>
</dbReference>
<dbReference type="InterPro" id="IPR048357">
    <property type="entry name" value="MSG_insertion"/>
</dbReference>
<dbReference type="NCBIfam" id="TIGR01345">
    <property type="entry name" value="malate_syn_G"/>
    <property type="match status" value="1"/>
</dbReference>
<dbReference type="NCBIfam" id="NF002825">
    <property type="entry name" value="PRK02999.1"/>
    <property type="match status" value="1"/>
</dbReference>
<dbReference type="PANTHER" id="PTHR42739">
    <property type="entry name" value="MALATE SYNTHASE G"/>
    <property type="match status" value="1"/>
</dbReference>
<dbReference type="PANTHER" id="PTHR42739:SF1">
    <property type="entry name" value="MALATE SYNTHASE G"/>
    <property type="match status" value="1"/>
</dbReference>
<dbReference type="Pfam" id="PF20659">
    <property type="entry name" value="MS_C"/>
    <property type="match status" value="1"/>
</dbReference>
<dbReference type="Pfam" id="PF20656">
    <property type="entry name" value="MS_N"/>
    <property type="match status" value="1"/>
</dbReference>
<dbReference type="Pfam" id="PF01274">
    <property type="entry name" value="MS_TIM-barrel"/>
    <property type="match status" value="1"/>
</dbReference>
<dbReference type="Pfam" id="PF20658">
    <property type="entry name" value="MSG_insertion"/>
    <property type="match status" value="1"/>
</dbReference>
<dbReference type="SUPFAM" id="SSF51645">
    <property type="entry name" value="Malate synthase G"/>
    <property type="match status" value="1"/>
</dbReference>
<feature type="chain" id="PRO_1000130897" description="Malate synthase G">
    <location>
        <begin position="1"/>
        <end position="724"/>
    </location>
</feature>
<feature type="active site" description="Proton acceptor" evidence="1">
    <location>
        <position position="337"/>
    </location>
</feature>
<feature type="active site" description="Proton donor" evidence="1">
    <location>
        <position position="628"/>
    </location>
</feature>
<feature type="binding site" evidence="1">
    <location>
        <position position="117"/>
    </location>
    <ligand>
        <name>acetyl-CoA</name>
        <dbReference type="ChEBI" id="CHEBI:57288"/>
    </ligand>
</feature>
<feature type="binding site" evidence="1">
    <location>
        <begin position="124"/>
        <end position="125"/>
    </location>
    <ligand>
        <name>acetyl-CoA</name>
        <dbReference type="ChEBI" id="CHEBI:57288"/>
    </ligand>
</feature>
<feature type="binding site" evidence="1">
    <location>
        <position position="273"/>
    </location>
    <ligand>
        <name>acetyl-CoA</name>
        <dbReference type="ChEBI" id="CHEBI:57288"/>
    </ligand>
</feature>
<feature type="binding site" evidence="1">
    <location>
        <position position="310"/>
    </location>
    <ligand>
        <name>acetyl-CoA</name>
        <dbReference type="ChEBI" id="CHEBI:57288"/>
    </ligand>
</feature>
<feature type="binding site" evidence="1">
    <location>
        <position position="337"/>
    </location>
    <ligand>
        <name>glyoxylate</name>
        <dbReference type="ChEBI" id="CHEBI:36655"/>
    </ligand>
</feature>
<feature type="binding site" evidence="1">
    <location>
        <position position="429"/>
    </location>
    <ligand>
        <name>glyoxylate</name>
        <dbReference type="ChEBI" id="CHEBI:36655"/>
    </ligand>
</feature>
<feature type="binding site" evidence="1">
    <location>
        <position position="429"/>
    </location>
    <ligand>
        <name>Mg(2+)</name>
        <dbReference type="ChEBI" id="CHEBI:18420"/>
    </ligand>
</feature>
<feature type="binding site" evidence="1">
    <location>
        <begin position="454"/>
        <end position="457"/>
    </location>
    <ligand>
        <name>glyoxylate</name>
        <dbReference type="ChEBI" id="CHEBI:36655"/>
    </ligand>
</feature>
<feature type="binding site" evidence="1">
    <location>
        <position position="457"/>
    </location>
    <ligand>
        <name>Mg(2+)</name>
        <dbReference type="ChEBI" id="CHEBI:18420"/>
    </ligand>
</feature>
<feature type="binding site" evidence="1">
    <location>
        <position position="538"/>
    </location>
    <ligand>
        <name>acetyl-CoA</name>
        <dbReference type="ChEBI" id="CHEBI:57288"/>
    </ligand>
</feature>
<feature type="modified residue" description="Cysteine sulfenic acid (-SOH)" evidence="1">
    <location>
        <position position="614"/>
    </location>
</feature>
<name>MASZ_RHOPT</name>
<sequence>MNRIDAHGLKIAPVLFDFIAKEAAPKTGIAPDVFWAGLAAIVRDLAPKTRALLKTRDDLQAKIDAWHLANKGKKQDMAAYTAFLKEIGYLLPEPPTVPVETANIDEEIGKLCGPQLVVPLSNARYALNAANARWGSLYDAFYGTDAIPQEATQAKGYDKARGDKVIAKAKAFLDQAAPLATGSHSDVTGYSVIAGQLSAKLKSGNATGLKKPAQFAGFRGDAANPSAVLLVNNGLHIEIKIDRANTIGKDDPAGVADLVIESAVSTILDMEDSVAAVDADDKVLIYRNTLGLMDGTLSESFEKGGKTVTRALNGDRTYTAPDGKEISLHGRSLLLMRNVGHHMWTDAVLDSDGQEIPEGFLDAAVSGLIAIHDLKHLGKTRNSRTGSVYIVKPKMHGPDEVALTVELFGRVETMLGLTANTLKVGIMDEERRTTVNLKACIQNASKRIVFINTGFLDRTGDEIHTSMEAGPMIRKNEMKAQPWIKAYEDWNVDTGLVDGLPGHAQIGKGMWAAPDKMADMLAQKIGHPQAGATTAWVPSPTAATLHALHYHQVDVIARQQELAKGGPRAKLEDILTIPVSNSNWAPDDVRQEIDNNCQGILGYVVRWIDQGVGCSKVPDIHDVGLMEDRATLRISSQHLANWLHHGVVTKDQVLDSLKRMAVIVDKQNEGDALYRPIAPDFDGVAFEAACDLIFKGRAQPNGYTEYILHERRREAKAAHLESAR</sequence>
<reference key="1">
    <citation type="submission" date="2008-05" db="EMBL/GenBank/DDBJ databases">
        <title>Complete sequence of Rhodopseudomonas palustris TIE-1.</title>
        <authorList>
            <consortium name="US DOE Joint Genome Institute"/>
            <person name="Lucas S."/>
            <person name="Copeland A."/>
            <person name="Lapidus A."/>
            <person name="Glavina del Rio T."/>
            <person name="Dalin E."/>
            <person name="Tice H."/>
            <person name="Pitluck S."/>
            <person name="Chain P."/>
            <person name="Malfatti S."/>
            <person name="Shin M."/>
            <person name="Vergez L."/>
            <person name="Lang D."/>
            <person name="Schmutz J."/>
            <person name="Larimer F."/>
            <person name="Land M."/>
            <person name="Hauser L."/>
            <person name="Kyrpides N."/>
            <person name="Mikhailova N."/>
            <person name="Emerson D."/>
            <person name="Newman D.K."/>
            <person name="Roden E."/>
            <person name="Richardson P."/>
        </authorList>
    </citation>
    <scope>NUCLEOTIDE SEQUENCE [LARGE SCALE GENOMIC DNA]</scope>
    <source>
        <strain>TIE-1</strain>
    </source>
</reference>
<comment type="function">
    <text evidence="1">Involved in the glycolate utilization. Catalyzes the condensation and subsequent hydrolysis of acetyl-coenzyme A (acetyl-CoA) and glyoxylate to form malate and CoA.</text>
</comment>
<comment type="catalytic activity">
    <reaction evidence="1">
        <text>glyoxylate + acetyl-CoA + H2O = (S)-malate + CoA + H(+)</text>
        <dbReference type="Rhea" id="RHEA:18181"/>
        <dbReference type="ChEBI" id="CHEBI:15377"/>
        <dbReference type="ChEBI" id="CHEBI:15378"/>
        <dbReference type="ChEBI" id="CHEBI:15589"/>
        <dbReference type="ChEBI" id="CHEBI:36655"/>
        <dbReference type="ChEBI" id="CHEBI:57287"/>
        <dbReference type="ChEBI" id="CHEBI:57288"/>
        <dbReference type="EC" id="2.3.3.9"/>
    </reaction>
</comment>
<comment type="cofactor">
    <cofactor evidence="1">
        <name>Mg(2+)</name>
        <dbReference type="ChEBI" id="CHEBI:18420"/>
    </cofactor>
</comment>
<comment type="pathway">
    <text evidence="1">Carbohydrate metabolism; glyoxylate cycle; (S)-malate from isocitrate: step 2/2.</text>
</comment>
<comment type="subunit">
    <text evidence="1">Monomer.</text>
</comment>
<comment type="subcellular location">
    <subcellularLocation>
        <location evidence="1">Cytoplasm</location>
    </subcellularLocation>
</comment>
<comment type="similarity">
    <text evidence="1">Belongs to the malate synthase family. GlcB subfamily.</text>
</comment>
<evidence type="ECO:0000255" key="1">
    <source>
        <dbReference type="HAMAP-Rule" id="MF_00641"/>
    </source>
</evidence>
<organism>
    <name type="scientific">Rhodopseudomonas palustris (strain TIE-1)</name>
    <dbReference type="NCBI Taxonomy" id="395960"/>
    <lineage>
        <taxon>Bacteria</taxon>
        <taxon>Pseudomonadati</taxon>
        <taxon>Pseudomonadota</taxon>
        <taxon>Alphaproteobacteria</taxon>
        <taxon>Hyphomicrobiales</taxon>
        <taxon>Nitrobacteraceae</taxon>
        <taxon>Rhodopseudomonas</taxon>
    </lineage>
</organism>
<accession>B3QKU1</accession>
<protein>
    <recommendedName>
        <fullName evidence="1">Malate synthase G</fullName>
        <ecNumber evidence="1">2.3.3.9</ecNumber>
    </recommendedName>
</protein>